<name>14332_SOLLC</name>
<reference key="1">
    <citation type="journal article" date="1999" name="Plant Physiol.">
        <title>Fusicoccin, 14-3-3 proteins, and defense responses in tomato plants.</title>
        <authorList>
            <person name="Roberts M.R."/>
            <person name="Bowles D.J."/>
        </authorList>
    </citation>
    <scope>NUCLEOTIDE SEQUENCE [GENOMIC DNA]</scope>
    <source>
        <strain>cv. Moneymaker</strain>
        <tissue>Leaf</tissue>
    </source>
</reference>
<reference key="2">
    <citation type="submission" date="2002-08" db="EMBL/GenBank/DDBJ databases">
        <authorList>
            <person name="Roberts M.R."/>
        </authorList>
    </citation>
    <scope>SEQUENCE REVISION TO 11-12 AND 58-60</scope>
</reference>
<organism>
    <name type="scientific">Solanum lycopersicum</name>
    <name type="common">Tomato</name>
    <name type="synonym">Lycopersicon esculentum</name>
    <dbReference type="NCBI Taxonomy" id="4081"/>
    <lineage>
        <taxon>Eukaryota</taxon>
        <taxon>Viridiplantae</taxon>
        <taxon>Streptophyta</taxon>
        <taxon>Embryophyta</taxon>
        <taxon>Tracheophyta</taxon>
        <taxon>Spermatophyta</taxon>
        <taxon>Magnoliopsida</taxon>
        <taxon>eudicotyledons</taxon>
        <taxon>Gunneridae</taxon>
        <taxon>Pentapetalae</taxon>
        <taxon>asterids</taxon>
        <taxon>lamiids</taxon>
        <taxon>Solanales</taxon>
        <taxon>Solanaceae</taxon>
        <taxon>Solanoideae</taxon>
        <taxon>Solaneae</taxon>
        <taxon>Solanum</taxon>
        <taxon>Solanum subgen. Lycopersicon</taxon>
    </lineage>
</organism>
<feature type="chain" id="PRO_0000058682" description="14-3-3 protein 2">
    <location>
        <begin position="1"/>
        <end position="254"/>
    </location>
</feature>
<evidence type="ECO:0000305" key="1"/>
<comment type="subunit">
    <text evidence="1">Homodimer.</text>
</comment>
<comment type="similarity">
    <text evidence="1">Belongs to the 14-3-3 family.</text>
</comment>
<proteinExistence type="inferred from homology"/>
<sequence>MAREENVYMAKLAEQAERYEEMVQFMEKVSTSLGSEELTVEERNLLSVAYKNVIGARRASWRIISSIEQKEESRGNEEHVKCIKEYRSKIESELSDICDGILKLLDSNLIPSASNGDSKVFYLKMKGDYHRYLAEFKTGAERKEAAESTLSAYKAAQDIANTELAPTHPIRLGLALNFSVFYYEILNSPDRACNLAKQAFDEAIAELDTLGEESYKDSTLIMQLLRDNLTLWTSDMQDDGADEIKETKNDNEQQ</sequence>
<dbReference type="EMBL" id="X95901">
    <property type="protein sequence ID" value="CAA65146.2"/>
    <property type="molecule type" value="Genomic_DNA"/>
</dbReference>
<dbReference type="PIR" id="T07387">
    <property type="entry name" value="T07387"/>
</dbReference>
<dbReference type="SMR" id="P93208"/>
<dbReference type="STRING" id="4081.P93208"/>
<dbReference type="PaxDb" id="4081-Solyc12g057110.2.1"/>
<dbReference type="KEGG" id="sly:101247195"/>
<dbReference type="eggNOG" id="KOG0841">
    <property type="taxonomic scope" value="Eukaryota"/>
</dbReference>
<dbReference type="HOGENOM" id="CLU_058290_0_0_1"/>
<dbReference type="InParanoid" id="P93208"/>
<dbReference type="OrthoDB" id="10260625at2759"/>
<dbReference type="PhylomeDB" id="P93208"/>
<dbReference type="Proteomes" id="UP000004994">
    <property type="component" value="Unplaced"/>
</dbReference>
<dbReference type="ExpressionAtlas" id="P93208">
    <property type="expression patterns" value="baseline and differential"/>
</dbReference>
<dbReference type="GO" id="GO:0005737">
    <property type="term" value="C:cytoplasm"/>
    <property type="evidence" value="ECO:0000318"/>
    <property type="project" value="GO_Central"/>
</dbReference>
<dbReference type="GO" id="GO:0008104">
    <property type="term" value="P:protein localization"/>
    <property type="evidence" value="ECO:0000318"/>
    <property type="project" value="GO_Central"/>
</dbReference>
<dbReference type="GO" id="GO:0007165">
    <property type="term" value="P:signal transduction"/>
    <property type="evidence" value="ECO:0000318"/>
    <property type="project" value="GO_Central"/>
</dbReference>
<dbReference type="FunFam" id="1.20.190.20:FF:000002">
    <property type="entry name" value="14-3-3 protein epsilon"/>
    <property type="match status" value="1"/>
</dbReference>
<dbReference type="Gene3D" id="1.20.190.20">
    <property type="entry name" value="14-3-3 domain"/>
    <property type="match status" value="1"/>
</dbReference>
<dbReference type="InterPro" id="IPR000308">
    <property type="entry name" value="14-3-3"/>
</dbReference>
<dbReference type="InterPro" id="IPR023409">
    <property type="entry name" value="14-3-3_CS"/>
</dbReference>
<dbReference type="InterPro" id="IPR036815">
    <property type="entry name" value="14-3-3_dom_sf"/>
</dbReference>
<dbReference type="InterPro" id="IPR023410">
    <property type="entry name" value="14-3-3_domain"/>
</dbReference>
<dbReference type="PANTHER" id="PTHR18860">
    <property type="entry name" value="14-3-3 PROTEIN"/>
    <property type="match status" value="1"/>
</dbReference>
<dbReference type="Pfam" id="PF00244">
    <property type="entry name" value="14-3-3"/>
    <property type="match status" value="1"/>
</dbReference>
<dbReference type="PIRSF" id="PIRSF000868">
    <property type="entry name" value="14-3-3"/>
    <property type="match status" value="1"/>
</dbReference>
<dbReference type="PRINTS" id="PR00305">
    <property type="entry name" value="1433ZETA"/>
</dbReference>
<dbReference type="SMART" id="SM00101">
    <property type="entry name" value="14_3_3"/>
    <property type="match status" value="1"/>
</dbReference>
<dbReference type="SUPFAM" id="SSF48445">
    <property type="entry name" value="14-3-3 protein"/>
    <property type="match status" value="1"/>
</dbReference>
<dbReference type="PROSITE" id="PS00796">
    <property type="entry name" value="1433_1"/>
    <property type="match status" value="1"/>
</dbReference>
<dbReference type="PROSITE" id="PS00797">
    <property type="entry name" value="1433_2"/>
    <property type="match status" value="1"/>
</dbReference>
<protein>
    <recommendedName>
        <fullName>14-3-3 protein 2</fullName>
    </recommendedName>
</protein>
<keyword id="KW-1185">Reference proteome</keyword>
<accession>P93208</accession>
<gene>
    <name type="primary">TFT2</name>
</gene>